<name>YO034_YEAST</name>
<organism>
    <name type="scientific">Saccharomyces cerevisiae (strain ATCC 204508 / S288c)</name>
    <name type="common">Baker's yeast</name>
    <dbReference type="NCBI Taxonomy" id="559292"/>
    <lineage>
        <taxon>Eukaryota</taxon>
        <taxon>Fungi</taxon>
        <taxon>Dikarya</taxon>
        <taxon>Ascomycota</taxon>
        <taxon>Saccharomycotina</taxon>
        <taxon>Saccharomycetes</taxon>
        <taxon>Saccharomycetales</taxon>
        <taxon>Saccharomycetaceae</taxon>
        <taxon>Saccharomyces</taxon>
    </lineage>
</organism>
<feature type="chain" id="PRO_0000237646" description="Uncharacterized membrane protein YOR034C-A">
    <location>
        <begin position="1"/>
        <end position="80"/>
    </location>
</feature>
<feature type="transmembrane region" description="Helical" evidence="1">
    <location>
        <begin position="10"/>
        <end position="29"/>
    </location>
</feature>
<proteinExistence type="evidence at protein level"/>
<sequence length="80" mass="9779">MNTQELCKIFVAREYPLVVVPFIYFVLFLHQKYHTTLNYVWYPTCSKRIWVREKGRKCSFFFFSKVPRSDGFANNRCQRK</sequence>
<reference key="1">
    <citation type="journal article" date="1997" name="Nature">
        <title>The nucleotide sequence of Saccharomyces cerevisiae chromosome XV.</title>
        <authorList>
            <person name="Dujon B."/>
            <person name="Albermann K."/>
            <person name="Aldea M."/>
            <person name="Alexandraki D."/>
            <person name="Ansorge W."/>
            <person name="Arino J."/>
            <person name="Benes V."/>
            <person name="Bohn C."/>
            <person name="Bolotin-Fukuhara M."/>
            <person name="Bordonne R."/>
            <person name="Boyer J."/>
            <person name="Camasses A."/>
            <person name="Casamayor A."/>
            <person name="Casas C."/>
            <person name="Cheret G."/>
            <person name="Cziepluch C."/>
            <person name="Daignan-Fornier B."/>
            <person name="Dang V.-D."/>
            <person name="de Haan M."/>
            <person name="Delius H."/>
            <person name="Durand P."/>
            <person name="Fairhead C."/>
            <person name="Feldmann H."/>
            <person name="Gaillon L."/>
            <person name="Galisson F."/>
            <person name="Gamo F.-J."/>
            <person name="Gancedo C."/>
            <person name="Goffeau A."/>
            <person name="Goulding S.E."/>
            <person name="Grivell L.A."/>
            <person name="Habbig B."/>
            <person name="Hand N.J."/>
            <person name="Hani J."/>
            <person name="Hattenhorst U."/>
            <person name="Hebling U."/>
            <person name="Hernando Y."/>
            <person name="Herrero E."/>
            <person name="Heumann K."/>
            <person name="Hiesel R."/>
            <person name="Hilger F."/>
            <person name="Hofmann B."/>
            <person name="Hollenberg C.P."/>
            <person name="Hughes B."/>
            <person name="Jauniaux J.-C."/>
            <person name="Kalogeropoulos A."/>
            <person name="Katsoulou C."/>
            <person name="Kordes E."/>
            <person name="Lafuente M.J."/>
            <person name="Landt O."/>
            <person name="Louis E.J."/>
            <person name="Maarse A.C."/>
            <person name="Madania A."/>
            <person name="Mannhaupt G."/>
            <person name="Marck C."/>
            <person name="Martin R.P."/>
            <person name="Mewes H.-W."/>
            <person name="Michaux G."/>
            <person name="Paces V."/>
            <person name="Parle-McDermott A.G."/>
            <person name="Pearson B.M."/>
            <person name="Perrin A."/>
            <person name="Pettersson B."/>
            <person name="Poch O."/>
            <person name="Pohl T.M."/>
            <person name="Poirey R."/>
            <person name="Portetelle D."/>
            <person name="Pujol A."/>
            <person name="Purnelle B."/>
            <person name="Ramezani Rad M."/>
            <person name="Rechmann S."/>
            <person name="Schwager C."/>
            <person name="Schweizer M."/>
            <person name="Sor F."/>
            <person name="Sterky F."/>
            <person name="Tarassov I.A."/>
            <person name="Teodoru C."/>
            <person name="Tettelin H."/>
            <person name="Thierry A."/>
            <person name="Tobiasch E."/>
            <person name="Tzermia M."/>
            <person name="Uhlen M."/>
            <person name="Unseld M."/>
            <person name="Valens M."/>
            <person name="Vandenbol M."/>
            <person name="Vetter I."/>
            <person name="Vlcek C."/>
            <person name="Voet M."/>
            <person name="Volckaert G."/>
            <person name="Voss H."/>
            <person name="Wambutt R."/>
            <person name="Wedler H."/>
            <person name="Wiemann S."/>
            <person name="Winsor B."/>
            <person name="Wolfe K.H."/>
            <person name="Zollner A."/>
            <person name="Zumstein E."/>
            <person name="Kleine K."/>
        </authorList>
    </citation>
    <scope>NUCLEOTIDE SEQUENCE [LARGE SCALE GENOMIC DNA]</scope>
    <source>
        <strain>ATCC 204508 / S288c</strain>
    </source>
</reference>
<reference key="2">
    <citation type="journal article" date="2014" name="G3 (Bethesda)">
        <title>The reference genome sequence of Saccharomyces cerevisiae: Then and now.</title>
        <authorList>
            <person name="Engel S.R."/>
            <person name="Dietrich F.S."/>
            <person name="Fisk D.G."/>
            <person name="Binkley G."/>
            <person name="Balakrishnan R."/>
            <person name="Costanzo M.C."/>
            <person name="Dwight S.S."/>
            <person name="Hitz B.C."/>
            <person name="Karra K."/>
            <person name="Nash R.S."/>
            <person name="Weng S."/>
            <person name="Wong E.D."/>
            <person name="Lloyd P."/>
            <person name="Skrzypek M.S."/>
            <person name="Miyasato S.R."/>
            <person name="Simison M."/>
            <person name="Cherry J.M."/>
        </authorList>
    </citation>
    <scope>GENOME REANNOTATION</scope>
    <source>
        <strain>ATCC 204508 / S288c</strain>
    </source>
</reference>
<reference key="3">
    <citation type="journal article" date="2002" name="Genome Res.">
        <title>Parallel identification of new genes in Saccharomyces cerevisiae.</title>
        <authorList>
            <person name="Oshiro G."/>
            <person name="Wodicka L.M."/>
            <person name="Washburn M.P."/>
            <person name="Yates J.R. III"/>
            <person name="Lockhart D.J."/>
            <person name="Winzeler E.A."/>
        </authorList>
    </citation>
    <scope>IDENTIFICATION BY MASS SPECTROMETRY</scope>
</reference>
<keyword id="KW-0472">Membrane</keyword>
<keyword id="KW-1185">Reference proteome</keyword>
<keyword id="KW-0812">Transmembrane</keyword>
<keyword id="KW-1133">Transmembrane helix</keyword>
<comment type="subcellular location">
    <subcellularLocation>
        <location evidence="2">Membrane</location>
        <topology evidence="2">Single-pass membrane protein</topology>
    </subcellularLocation>
</comment>
<evidence type="ECO:0000255" key="1"/>
<evidence type="ECO:0000305" key="2"/>
<dbReference type="EMBL" id="Z74942">
    <property type="status" value="NOT_ANNOTATED_CDS"/>
    <property type="molecule type" value="Genomic_DNA"/>
</dbReference>
<dbReference type="EMBL" id="BK006948">
    <property type="protein sequence ID" value="DAA10817.1"/>
    <property type="molecule type" value="Genomic_DNA"/>
</dbReference>
<dbReference type="RefSeq" id="NP_878170.1">
    <property type="nucleotide sequence ID" value="NM_001184667.1"/>
</dbReference>
<dbReference type="BioGRID" id="37024">
    <property type="interactions" value="107"/>
</dbReference>
<dbReference type="FunCoup" id="Q3E735">
    <property type="interactions" value="1"/>
</dbReference>
<dbReference type="STRING" id="4932.YOR034C-A"/>
<dbReference type="PaxDb" id="4932-YOR034C-A"/>
<dbReference type="EnsemblFungi" id="YOR034C-A_mRNA">
    <property type="protein sequence ID" value="YOR034C-A"/>
    <property type="gene ID" value="YOR034C-A"/>
</dbReference>
<dbReference type="GeneID" id="1466482"/>
<dbReference type="KEGG" id="sce:YOR034C-A"/>
<dbReference type="AGR" id="SGD:S000028856"/>
<dbReference type="SGD" id="S000028856">
    <property type="gene designation" value="YOR034C-A"/>
</dbReference>
<dbReference type="VEuPathDB" id="FungiDB:YOR034C-A"/>
<dbReference type="HOGENOM" id="CLU_196231_0_0_1"/>
<dbReference type="InParanoid" id="Q3E735"/>
<dbReference type="BioCyc" id="YEAST:G3O-33914-MONOMER"/>
<dbReference type="BioGRID-ORCS" id="1466482">
    <property type="hits" value="0 hits in 10 CRISPR screens"/>
</dbReference>
<dbReference type="PRO" id="PR:Q3E735"/>
<dbReference type="Proteomes" id="UP000002311">
    <property type="component" value="Chromosome XV"/>
</dbReference>
<dbReference type="RNAct" id="Q3E735">
    <property type="molecule type" value="protein"/>
</dbReference>
<dbReference type="GO" id="GO:0016020">
    <property type="term" value="C:membrane"/>
    <property type="evidence" value="ECO:0007669"/>
    <property type="project" value="UniProtKB-SubCell"/>
</dbReference>
<protein>
    <recommendedName>
        <fullName>Uncharacterized membrane protein YOR034C-A</fullName>
    </recommendedName>
</protein>
<gene>
    <name type="ordered locus">YOR034C-A</name>
    <name type="ORF">NOR002C</name>
</gene>
<accession>Q3E735</accession>
<accession>D6W2A1</accession>